<feature type="chain" id="PRO_0000135975" description="Replication factor C small subunit">
    <location>
        <begin position="1"/>
        <end position="338"/>
    </location>
</feature>
<feature type="binding site" evidence="1">
    <location>
        <begin position="53"/>
        <end position="60"/>
    </location>
    <ligand>
        <name>ATP</name>
        <dbReference type="ChEBI" id="CHEBI:30616"/>
    </ligand>
</feature>
<accession>Q8PVY4</accession>
<comment type="function">
    <text evidence="1">Part of the RFC clamp loader complex which loads the PCNA sliding clamp onto DNA.</text>
</comment>
<comment type="subunit">
    <text evidence="1">Heteromultimer composed of small subunits (RfcS) and large subunits (RfcL).</text>
</comment>
<comment type="similarity">
    <text evidence="1">Belongs to the activator 1 small subunits family. RfcS subfamily.</text>
</comment>
<evidence type="ECO:0000255" key="1">
    <source>
        <dbReference type="HAMAP-Rule" id="MF_01509"/>
    </source>
</evidence>
<keyword id="KW-0067">ATP-binding</keyword>
<keyword id="KW-0235">DNA replication</keyword>
<keyword id="KW-0547">Nucleotide-binding</keyword>
<gene>
    <name evidence="1" type="primary">rfcS</name>
    <name type="ordered locus">MM_1821</name>
</gene>
<organism>
    <name type="scientific">Methanosarcina mazei (strain ATCC BAA-159 / DSM 3647 / Goe1 / Go1 / JCM 11833 / OCM 88)</name>
    <name type="common">Methanosarcina frisia</name>
    <dbReference type="NCBI Taxonomy" id="192952"/>
    <lineage>
        <taxon>Archaea</taxon>
        <taxon>Methanobacteriati</taxon>
        <taxon>Methanobacteriota</taxon>
        <taxon>Stenosarchaea group</taxon>
        <taxon>Methanomicrobia</taxon>
        <taxon>Methanosarcinales</taxon>
        <taxon>Methanosarcinaceae</taxon>
        <taxon>Methanosarcina</taxon>
    </lineage>
</organism>
<sequence length="338" mass="38276">MQAQMEDFKIKEEIWIEKYRPVRLNQVAGQEETIERLMSYVATKNLPHLLFSGPPGVGKTASAVSIAREIFGEDLWRENFTELNASDERGIDIVRNKIKNFAKTAPMGGAPFKIIFLDEADALTSDAQSALRRTMEKFSSNCRFILSCNYSSKIIEPIQSRCAVYRFRRLSDKAIRERLEYIAKEQDLSITDGGYEALIYVAQGDMRKAVNSLQAAAFIDVEKPISRETIYRTTATANPEEIKNLIETALRGNFRVARKELNRLLYEEGLSGEDIVGQIYRVVSEMDNLMILDLGLSERDIVGLVDIIGETDFRLTEGASEKIQLEALLAHFALSREE</sequence>
<name>RFCS_METMA</name>
<proteinExistence type="inferred from homology"/>
<reference key="1">
    <citation type="journal article" date="2002" name="J. Mol. Microbiol. Biotechnol.">
        <title>The genome of Methanosarcina mazei: evidence for lateral gene transfer between Bacteria and Archaea.</title>
        <authorList>
            <person name="Deppenmeier U."/>
            <person name="Johann A."/>
            <person name="Hartsch T."/>
            <person name="Merkl R."/>
            <person name="Schmitz R.A."/>
            <person name="Martinez-Arias R."/>
            <person name="Henne A."/>
            <person name="Wiezer A."/>
            <person name="Baeumer S."/>
            <person name="Jacobi C."/>
            <person name="Brueggemann H."/>
            <person name="Lienard T."/>
            <person name="Christmann A."/>
            <person name="Boemecke M."/>
            <person name="Steckel S."/>
            <person name="Bhattacharyya A."/>
            <person name="Lykidis A."/>
            <person name="Overbeek R."/>
            <person name="Klenk H.-P."/>
            <person name="Gunsalus R.P."/>
            <person name="Fritz H.-J."/>
            <person name="Gottschalk G."/>
        </authorList>
    </citation>
    <scope>NUCLEOTIDE SEQUENCE [LARGE SCALE GENOMIC DNA]</scope>
    <source>
        <strain>ATCC BAA-159 / DSM 3647 / Goe1 / Go1 / JCM 11833 / OCM 88</strain>
    </source>
</reference>
<protein>
    <recommendedName>
        <fullName evidence="1">Replication factor C small subunit</fullName>
        <shortName evidence="1">RFC small subunit</shortName>
    </recommendedName>
    <alternativeName>
        <fullName evidence="1">Clamp loader small subunit</fullName>
    </alternativeName>
</protein>
<dbReference type="EMBL" id="AE008384">
    <property type="protein sequence ID" value="AAM31517.1"/>
    <property type="molecule type" value="Genomic_DNA"/>
</dbReference>
<dbReference type="SMR" id="Q8PVY4"/>
<dbReference type="KEGG" id="mma:MM_1821"/>
<dbReference type="PATRIC" id="fig|192952.21.peg.2106"/>
<dbReference type="eggNOG" id="arCOG00469">
    <property type="taxonomic scope" value="Archaea"/>
</dbReference>
<dbReference type="HOGENOM" id="CLU_042324_0_1_2"/>
<dbReference type="Proteomes" id="UP000000595">
    <property type="component" value="Chromosome"/>
</dbReference>
<dbReference type="GO" id="GO:0005663">
    <property type="term" value="C:DNA replication factor C complex"/>
    <property type="evidence" value="ECO:0007669"/>
    <property type="project" value="InterPro"/>
</dbReference>
<dbReference type="GO" id="GO:0005524">
    <property type="term" value="F:ATP binding"/>
    <property type="evidence" value="ECO:0007669"/>
    <property type="project" value="UniProtKB-UniRule"/>
</dbReference>
<dbReference type="GO" id="GO:0016887">
    <property type="term" value="F:ATP hydrolysis activity"/>
    <property type="evidence" value="ECO:0007669"/>
    <property type="project" value="InterPro"/>
</dbReference>
<dbReference type="GO" id="GO:0003677">
    <property type="term" value="F:DNA binding"/>
    <property type="evidence" value="ECO:0007669"/>
    <property type="project" value="InterPro"/>
</dbReference>
<dbReference type="GO" id="GO:0003689">
    <property type="term" value="F:DNA clamp loader activity"/>
    <property type="evidence" value="ECO:0007669"/>
    <property type="project" value="UniProtKB-UniRule"/>
</dbReference>
<dbReference type="GO" id="GO:0006281">
    <property type="term" value="P:DNA repair"/>
    <property type="evidence" value="ECO:0007669"/>
    <property type="project" value="TreeGrafter"/>
</dbReference>
<dbReference type="GO" id="GO:0006261">
    <property type="term" value="P:DNA-templated DNA replication"/>
    <property type="evidence" value="ECO:0007669"/>
    <property type="project" value="TreeGrafter"/>
</dbReference>
<dbReference type="CDD" id="cd00009">
    <property type="entry name" value="AAA"/>
    <property type="match status" value="1"/>
</dbReference>
<dbReference type="CDD" id="cd18140">
    <property type="entry name" value="HLD_clamp_RFC"/>
    <property type="match status" value="1"/>
</dbReference>
<dbReference type="FunFam" id="1.10.8.60:FF:000279">
    <property type="entry name" value="Replication factor C small subunit"/>
    <property type="match status" value="1"/>
</dbReference>
<dbReference type="FunFam" id="1.20.272.10:FF:000029">
    <property type="entry name" value="Replication factor C small subunit"/>
    <property type="match status" value="1"/>
</dbReference>
<dbReference type="FunFam" id="3.40.50.300:FF:000129">
    <property type="entry name" value="Replication factor C subunit 5"/>
    <property type="match status" value="1"/>
</dbReference>
<dbReference type="Gene3D" id="1.10.8.60">
    <property type="match status" value="1"/>
</dbReference>
<dbReference type="Gene3D" id="1.20.272.10">
    <property type="match status" value="1"/>
</dbReference>
<dbReference type="Gene3D" id="3.40.50.300">
    <property type="entry name" value="P-loop containing nucleotide triphosphate hydrolases"/>
    <property type="match status" value="1"/>
</dbReference>
<dbReference type="HAMAP" id="MF_01509">
    <property type="entry name" value="RfcS"/>
    <property type="match status" value="1"/>
</dbReference>
<dbReference type="InterPro" id="IPR003593">
    <property type="entry name" value="AAA+_ATPase"/>
</dbReference>
<dbReference type="InterPro" id="IPR003959">
    <property type="entry name" value="ATPase_AAA_core"/>
</dbReference>
<dbReference type="InterPro" id="IPR008921">
    <property type="entry name" value="DNA_pol3_clamp-load_cplx_C"/>
</dbReference>
<dbReference type="InterPro" id="IPR050238">
    <property type="entry name" value="DNA_Rep/Repair_Clamp_Loader"/>
</dbReference>
<dbReference type="InterPro" id="IPR027417">
    <property type="entry name" value="P-loop_NTPase"/>
</dbReference>
<dbReference type="InterPro" id="IPR023748">
    <property type="entry name" value="Rep_factor-C_ssu_arc"/>
</dbReference>
<dbReference type="InterPro" id="IPR013748">
    <property type="entry name" value="Rep_factorC_C"/>
</dbReference>
<dbReference type="InterPro" id="IPR047854">
    <property type="entry name" value="RFC_lid"/>
</dbReference>
<dbReference type="NCBIfam" id="NF001679">
    <property type="entry name" value="PRK00440.1"/>
    <property type="match status" value="1"/>
</dbReference>
<dbReference type="PANTHER" id="PTHR11669">
    <property type="entry name" value="REPLICATION FACTOR C / DNA POLYMERASE III GAMMA-TAU SUBUNIT"/>
    <property type="match status" value="1"/>
</dbReference>
<dbReference type="PANTHER" id="PTHR11669:SF20">
    <property type="entry name" value="REPLICATION FACTOR C SUBUNIT 4"/>
    <property type="match status" value="1"/>
</dbReference>
<dbReference type="Pfam" id="PF00004">
    <property type="entry name" value="AAA"/>
    <property type="match status" value="1"/>
</dbReference>
<dbReference type="Pfam" id="PF08542">
    <property type="entry name" value="Rep_fac_C"/>
    <property type="match status" value="1"/>
</dbReference>
<dbReference type="SMART" id="SM00382">
    <property type="entry name" value="AAA"/>
    <property type="match status" value="1"/>
</dbReference>
<dbReference type="SUPFAM" id="SSF52540">
    <property type="entry name" value="P-loop containing nucleoside triphosphate hydrolases"/>
    <property type="match status" value="1"/>
</dbReference>
<dbReference type="SUPFAM" id="SSF48019">
    <property type="entry name" value="post-AAA+ oligomerization domain-like"/>
    <property type="match status" value="1"/>
</dbReference>